<protein>
    <recommendedName>
        <fullName>Adipokinetic prohormone type 2</fullName>
    </recommendedName>
    <component>
        <recommendedName>
            <fullName>Adipokinetic hormone 2</fullName>
        </recommendedName>
        <alternativeName>
            <fullName>Adipokinetic hormone II</fullName>
            <shortName>AKH-II</shortName>
        </alternativeName>
    </component>
    <component>
        <recommendedName>
            <fullName>Adipokinetic hormone precursor-related peptide beta chain</fullName>
            <shortName>APRP-beta</shortName>
        </recommendedName>
    </component>
</protein>
<reference key="1">
    <citation type="journal article" date="1990" name="J. Biol. Chem.">
        <title>The structurally similar neuropeptides adipokinetic hormone I and II are derived from similar, very small mRNAs.</title>
        <authorList>
            <person name="Noyes B.E."/>
            <person name="Schaffer M.H."/>
        </authorList>
    </citation>
    <scope>NUCLEOTIDE SEQUENCE [GENOMIC DNA / MRNA]</scope>
</reference>
<reference key="2">
    <citation type="journal article" date="1986" name="Biochem. Biophys. Res. Commun.">
        <title>Sequence analyses of adipokinetic hormones II from corpora cardiaca of Schistocerca nitans, Schistocerca gregaria, and Locusta migratoria by fast atom bombardment mass spectrometry.</title>
        <authorList>
            <person name="Gaede G."/>
            <person name="Goldsworthy G.J."/>
            <person name="Schaffer M.H."/>
            <person name="Cook J.C."/>
            <person name="Rinehart K.L. Jr."/>
        </authorList>
    </citation>
    <scope>PROTEIN SEQUENCE OF 23-30</scope>
    <scope>PYROGLUTAMATE FORMATION AT GLN-23</scope>
    <scope>AMIDATION AT TRP-30</scope>
</reference>
<keyword id="KW-0027">Amidation</keyword>
<keyword id="KW-0165">Cleavage on pair of basic residues</keyword>
<keyword id="KW-0903">Direct protein sequencing</keyword>
<keyword id="KW-1015">Disulfide bond</keyword>
<keyword id="KW-0286">Flight</keyword>
<keyword id="KW-0372">Hormone</keyword>
<keyword id="KW-0527">Neuropeptide</keyword>
<keyword id="KW-0873">Pyrrolidone carboxylic acid</keyword>
<keyword id="KW-0964">Secreted</keyword>
<keyword id="KW-0732">Signal</keyword>
<organism>
    <name type="scientific">Schistocerca nitens</name>
    <name type="common">Vagrant locust</name>
    <name type="synonym">Gray bird grasshopper</name>
    <dbReference type="NCBI Taxonomy" id="7011"/>
    <lineage>
        <taxon>Eukaryota</taxon>
        <taxon>Metazoa</taxon>
        <taxon>Ecdysozoa</taxon>
        <taxon>Arthropoda</taxon>
        <taxon>Hexapoda</taxon>
        <taxon>Insecta</taxon>
        <taxon>Pterygota</taxon>
        <taxon>Neoptera</taxon>
        <taxon>Polyneoptera</taxon>
        <taxon>Orthoptera</taxon>
        <taxon>Caelifera</taxon>
        <taxon>Acrididea</taxon>
        <taxon>Acridomorpha</taxon>
        <taxon>Acridoidea</taxon>
        <taxon>Acrididae</taxon>
        <taxon>Cyrtacanthacridinae</taxon>
        <taxon>Schistocerca</taxon>
    </lineage>
</organism>
<comment type="function">
    <text>This hormone, released from cells in the corpora cardiaca, causes release of diglycerides from the fat body and stimulation of muscles to use these diglycerides as an energy source during energy-demanding processes.</text>
</comment>
<comment type="subunit">
    <text>Adipokinetic hormone precursor-related peptide (APRP) can form three type of disulfide-bond dimers: p1 (alpha-alpha), p2 (alpha-beta), and p3 (beta-beta).</text>
</comment>
<comment type="subcellular location">
    <subcellularLocation>
        <location>Secreted</location>
    </subcellularLocation>
</comment>
<comment type="similarity">
    <text evidence="2">Belongs to the AKH/HRTH/RPCH family.</text>
</comment>
<sequence length="61" mass="6634">MRQGCALTLMLLVVVCAALSAAQLNFSTGWGRRYADPNADPMAFLYKLIQIEARKLAGCSN</sequence>
<evidence type="ECO:0000269" key="1">
    <source>
    </source>
</evidence>
<evidence type="ECO:0000305" key="2"/>
<name>AKH2_SCHNI</name>
<dbReference type="EMBL" id="L08775">
    <property type="protein sequence ID" value="AAA73930.1"/>
    <property type="molecule type" value="Genomic_DNA"/>
</dbReference>
<dbReference type="EMBL" id="L08774">
    <property type="protein sequence ID" value="AAA73930.1"/>
    <property type="status" value="JOINED"/>
    <property type="molecule type" value="Genomic_DNA"/>
</dbReference>
<dbReference type="EMBL" id="J05171">
    <property type="protein sequence ID" value="AAA73932.1"/>
    <property type="molecule type" value="mRNA"/>
</dbReference>
<dbReference type="PIR" id="B34913">
    <property type="entry name" value="B34913"/>
</dbReference>
<dbReference type="GO" id="GO:0005576">
    <property type="term" value="C:extracellular region"/>
    <property type="evidence" value="ECO:0007669"/>
    <property type="project" value="UniProtKB-SubCell"/>
</dbReference>
<dbReference type="GO" id="GO:0005179">
    <property type="term" value="F:hormone activity"/>
    <property type="evidence" value="ECO:0007669"/>
    <property type="project" value="UniProtKB-KW"/>
</dbReference>
<dbReference type="GO" id="GO:0007629">
    <property type="term" value="P:flight behavior"/>
    <property type="evidence" value="ECO:0007669"/>
    <property type="project" value="UniProtKB-KW"/>
</dbReference>
<dbReference type="GO" id="GO:0007218">
    <property type="term" value="P:neuropeptide signaling pathway"/>
    <property type="evidence" value="ECO:0007669"/>
    <property type="project" value="UniProtKB-KW"/>
</dbReference>
<dbReference type="InterPro" id="IPR002047">
    <property type="entry name" value="Adipokinetic_hormone_CS"/>
</dbReference>
<dbReference type="PROSITE" id="PS00256">
    <property type="entry name" value="AKH"/>
    <property type="match status" value="1"/>
</dbReference>
<feature type="signal peptide" evidence="1">
    <location>
        <begin position="1"/>
        <end position="22"/>
    </location>
</feature>
<feature type="chain" id="PRO_0000000926" description="Adipokinetic prohormone type 2">
    <location>
        <begin position="23"/>
        <end position="61"/>
    </location>
</feature>
<feature type="peptide" id="PRO_0000000927" description="Adipokinetic hormone 2" evidence="1">
    <location>
        <begin position="23"/>
        <end position="30"/>
    </location>
</feature>
<feature type="peptide" id="PRO_0000000928" description="Adipokinetic hormone precursor-related peptide beta chain">
    <location>
        <begin position="34"/>
        <end position="61"/>
    </location>
</feature>
<feature type="modified residue" description="Pyrrolidone carboxylic acid" evidence="1">
    <location>
        <position position="23"/>
    </location>
</feature>
<feature type="modified residue" description="Tryptophan amide" evidence="1">
    <location>
        <position position="30"/>
    </location>
</feature>
<feature type="disulfide bond" description="Interchain">
    <location>
        <position position="59"/>
    </location>
</feature>
<proteinExistence type="evidence at protein level"/>
<accession>P35807</accession>
<accession>P08378</accession>